<feature type="chain" id="PRO_1000203459" description="Protoheme IX farnesyltransferase">
    <location>
        <begin position="1"/>
        <end position="285"/>
    </location>
</feature>
<feature type="transmembrane region" description="Helical" evidence="1">
    <location>
        <begin position="13"/>
        <end position="33"/>
    </location>
</feature>
<feature type="transmembrane region" description="Helical" evidence="1">
    <location>
        <begin position="40"/>
        <end position="60"/>
    </location>
</feature>
<feature type="transmembrane region" description="Helical" evidence="1">
    <location>
        <begin position="89"/>
        <end position="109"/>
    </location>
</feature>
<feature type="transmembrane region" description="Helical" evidence="1">
    <location>
        <begin position="110"/>
        <end position="130"/>
    </location>
</feature>
<feature type="transmembrane region" description="Helical" evidence="1">
    <location>
        <begin position="137"/>
        <end position="157"/>
    </location>
</feature>
<feature type="transmembrane region" description="Helical" evidence="1">
    <location>
        <begin position="165"/>
        <end position="185"/>
    </location>
</feature>
<feature type="transmembrane region" description="Helical" evidence="1">
    <location>
        <begin position="194"/>
        <end position="214"/>
    </location>
</feature>
<feature type="transmembrane region" description="Helical" evidence="1">
    <location>
        <begin position="230"/>
        <end position="252"/>
    </location>
</feature>
<feature type="transmembrane region" description="Helical" evidence="1">
    <location>
        <begin position="265"/>
        <end position="285"/>
    </location>
</feature>
<keyword id="KW-1003">Cell membrane</keyword>
<keyword id="KW-0350">Heme biosynthesis</keyword>
<keyword id="KW-0472">Membrane</keyword>
<keyword id="KW-0808">Transferase</keyword>
<keyword id="KW-0812">Transmembrane</keyword>
<keyword id="KW-1133">Transmembrane helix</keyword>
<comment type="function">
    <text evidence="1">Converts heme B (protoheme IX) to heme O by substitution of the vinyl group on carbon 2 of heme B porphyrin ring with a hydroxyethyl farnesyl side group.</text>
</comment>
<comment type="catalytic activity">
    <reaction evidence="1">
        <text>heme b + (2E,6E)-farnesyl diphosphate + H2O = Fe(II)-heme o + diphosphate</text>
        <dbReference type="Rhea" id="RHEA:28070"/>
        <dbReference type="ChEBI" id="CHEBI:15377"/>
        <dbReference type="ChEBI" id="CHEBI:33019"/>
        <dbReference type="ChEBI" id="CHEBI:60344"/>
        <dbReference type="ChEBI" id="CHEBI:60530"/>
        <dbReference type="ChEBI" id="CHEBI:175763"/>
        <dbReference type="EC" id="2.5.1.141"/>
    </reaction>
</comment>
<comment type="pathway">
    <text evidence="1">Porphyrin-containing compound metabolism; heme O biosynthesis; heme O from protoheme: step 1/1.</text>
</comment>
<comment type="subcellular location">
    <subcellularLocation>
        <location evidence="1">Cell membrane</location>
        <topology evidence="1">Multi-pass membrane protein</topology>
    </subcellularLocation>
</comment>
<comment type="miscellaneous">
    <text evidence="1">Carbon 2 of the heme B porphyrin ring is defined according to the Fischer nomenclature.</text>
</comment>
<comment type="similarity">
    <text evidence="1">Belongs to the UbiA prenyltransferase family. Protoheme IX farnesyltransferase subfamily.</text>
</comment>
<gene>
    <name evidence="1" type="primary">ctaB</name>
    <name type="ordered locus">M1627_1595</name>
</gene>
<sequence length="285" mass="31250">MSLQQKIKAYLKLGKLGVVSLLDLAAVAGAFLAYKHGISLLPIIPMFIGGTLASMGAMIINSGIEIDRDKVMSRTSKRPTVVGYVNRKEAIIVGSLLAILGTALGFIDNILTAFFIALGVVIYIFVYTILLKPRTWLNIVIGGFAGSAAAWAGYTSLTNSLTLEGFLLGFLIFMWTPGHFWSLALKYREDYVNAHYPMLPAVVGITTSARAIAISNALMIPIVLLLGYYINLIALIAFSILSLFLMFLSYRLILNPTKEEAIKSFIFSNIYLMLILLIMIIVKLI</sequence>
<dbReference type="EC" id="2.5.1.141" evidence="1"/>
<dbReference type="EMBL" id="CP001401">
    <property type="protein sequence ID" value="ACP55477.1"/>
    <property type="molecule type" value="Genomic_DNA"/>
</dbReference>
<dbReference type="SMR" id="C3N652"/>
<dbReference type="KEGG" id="sim:M1627_1595"/>
<dbReference type="HOGENOM" id="CLU_029631_0_1_2"/>
<dbReference type="UniPathway" id="UPA00834">
    <property type="reaction ID" value="UER00712"/>
</dbReference>
<dbReference type="Proteomes" id="UP000002307">
    <property type="component" value="Chromosome"/>
</dbReference>
<dbReference type="GO" id="GO:0005886">
    <property type="term" value="C:plasma membrane"/>
    <property type="evidence" value="ECO:0007669"/>
    <property type="project" value="UniProtKB-SubCell"/>
</dbReference>
<dbReference type="GO" id="GO:0008495">
    <property type="term" value="F:protoheme IX farnesyltransferase activity"/>
    <property type="evidence" value="ECO:0007669"/>
    <property type="project" value="UniProtKB-UniRule"/>
</dbReference>
<dbReference type="GO" id="GO:0048034">
    <property type="term" value="P:heme O biosynthetic process"/>
    <property type="evidence" value="ECO:0007669"/>
    <property type="project" value="UniProtKB-UniRule"/>
</dbReference>
<dbReference type="CDD" id="cd13957">
    <property type="entry name" value="PT_UbiA_Cox10"/>
    <property type="match status" value="1"/>
</dbReference>
<dbReference type="FunFam" id="1.10.357.140:FF:000018">
    <property type="entry name" value="Protoheme IX farnesyltransferase"/>
    <property type="match status" value="1"/>
</dbReference>
<dbReference type="Gene3D" id="1.10.357.140">
    <property type="entry name" value="UbiA prenyltransferase"/>
    <property type="match status" value="1"/>
</dbReference>
<dbReference type="HAMAP" id="MF_00154">
    <property type="entry name" value="CyoE_CtaB"/>
    <property type="match status" value="1"/>
</dbReference>
<dbReference type="InterPro" id="IPR006369">
    <property type="entry name" value="Protohaem_IX_farnesylTrfase"/>
</dbReference>
<dbReference type="InterPro" id="IPR000537">
    <property type="entry name" value="UbiA_prenyltransferase"/>
</dbReference>
<dbReference type="InterPro" id="IPR044878">
    <property type="entry name" value="UbiA_sf"/>
</dbReference>
<dbReference type="NCBIfam" id="TIGR01473">
    <property type="entry name" value="cyoE_ctaB"/>
    <property type="match status" value="1"/>
</dbReference>
<dbReference type="PANTHER" id="PTHR43448">
    <property type="entry name" value="PROTOHEME IX FARNESYLTRANSFERASE, MITOCHONDRIAL"/>
    <property type="match status" value="1"/>
</dbReference>
<dbReference type="PANTHER" id="PTHR43448:SF2">
    <property type="entry name" value="PROTOHEME IX FARNESYLTRANSFERASE, MITOCHONDRIAL"/>
    <property type="match status" value="1"/>
</dbReference>
<dbReference type="Pfam" id="PF01040">
    <property type="entry name" value="UbiA"/>
    <property type="match status" value="1"/>
</dbReference>
<proteinExistence type="inferred from homology"/>
<organism>
    <name type="scientific">Saccharolobus islandicus (strain M.16.27)</name>
    <name type="common">Sulfolobus islandicus</name>
    <dbReference type="NCBI Taxonomy" id="427318"/>
    <lineage>
        <taxon>Archaea</taxon>
        <taxon>Thermoproteota</taxon>
        <taxon>Thermoprotei</taxon>
        <taxon>Sulfolobales</taxon>
        <taxon>Sulfolobaceae</taxon>
        <taxon>Saccharolobus</taxon>
    </lineage>
</organism>
<protein>
    <recommendedName>
        <fullName evidence="1">Protoheme IX farnesyltransferase</fullName>
        <ecNumber evidence="1">2.5.1.141</ecNumber>
    </recommendedName>
    <alternativeName>
        <fullName evidence="1">Heme B farnesyltransferase</fullName>
    </alternativeName>
    <alternativeName>
        <fullName evidence="1">Heme O synthase</fullName>
    </alternativeName>
</protein>
<accession>C3N652</accession>
<name>COXX_SACI3</name>
<reference key="1">
    <citation type="journal article" date="2009" name="Proc. Natl. Acad. Sci. U.S.A.">
        <title>Biogeography of the Sulfolobus islandicus pan-genome.</title>
        <authorList>
            <person name="Reno M.L."/>
            <person name="Held N.L."/>
            <person name="Fields C.J."/>
            <person name="Burke P.V."/>
            <person name="Whitaker R.J."/>
        </authorList>
    </citation>
    <scope>NUCLEOTIDE SEQUENCE [LARGE SCALE GENOMIC DNA]</scope>
    <source>
        <strain>M.16.27</strain>
    </source>
</reference>
<evidence type="ECO:0000255" key="1">
    <source>
        <dbReference type="HAMAP-Rule" id="MF_00154"/>
    </source>
</evidence>